<organism>
    <name type="scientific">Roseiflexus sp. (strain RS-1)</name>
    <dbReference type="NCBI Taxonomy" id="357808"/>
    <lineage>
        <taxon>Bacteria</taxon>
        <taxon>Bacillati</taxon>
        <taxon>Chloroflexota</taxon>
        <taxon>Chloroflexia</taxon>
        <taxon>Chloroflexales</taxon>
        <taxon>Roseiflexineae</taxon>
        <taxon>Roseiflexaceae</taxon>
        <taxon>Roseiflexus</taxon>
    </lineage>
</organism>
<name>NUOB1_ROSS1</name>
<protein>
    <recommendedName>
        <fullName evidence="1">NADH-quinone oxidoreductase subunit B 1</fullName>
        <ecNumber evidence="1">7.1.1.-</ecNumber>
    </recommendedName>
    <alternativeName>
        <fullName evidence="1">NADH dehydrogenase I subunit B 1</fullName>
    </alternativeName>
    <alternativeName>
        <fullName evidence="1">NDH-1 subunit B 1</fullName>
    </alternativeName>
</protein>
<gene>
    <name evidence="1" type="primary">nuoB1</name>
    <name type="ordered locus">RoseRS_2990</name>
</gene>
<sequence length="268" mass="30178">MSDDREIQLEAEKHGVFLTTMQRFYNWGRRSSIWPLSFGLACCAIEMMATGLARFDLARFGAEMFRASPRQADLMIVAGTVTKKMAPQVVRLYNQMPEPRYVISMGACATSGGPFRDGYNVLRGIDLLIPVDVYIPGCPPRPEALLHALMTLQKQIDAQRLNQVRWYGKREAKEYPVPTFGKHGLEIDGKLIDPVGGLPLVSPYTSPTHGEMRSGMIEHPELVRHFPIMDETVERESPYKATGIAIEIAHNDLKRPAVEVDHAEDERR</sequence>
<proteinExistence type="inferred from homology"/>
<dbReference type="EC" id="7.1.1.-" evidence="1"/>
<dbReference type="EMBL" id="CP000686">
    <property type="protein sequence ID" value="ABQ91354.1"/>
    <property type="molecule type" value="Genomic_DNA"/>
</dbReference>
<dbReference type="RefSeq" id="WP_011957698.1">
    <property type="nucleotide sequence ID" value="NC_009523.1"/>
</dbReference>
<dbReference type="SMR" id="A5UXK1"/>
<dbReference type="STRING" id="357808.RoseRS_2990"/>
<dbReference type="KEGG" id="rrs:RoseRS_2990"/>
<dbReference type="eggNOG" id="COG0377">
    <property type="taxonomic scope" value="Bacteria"/>
</dbReference>
<dbReference type="HOGENOM" id="CLU_055737_3_0_0"/>
<dbReference type="OrthoDB" id="9786737at2"/>
<dbReference type="Proteomes" id="UP000006554">
    <property type="component" value="Chromosome"/>
</dbReference>
<dbReference type="GO" id="GO:0005886">
    <property type="term" value="C:plasma membrane"/>
    <property type="evidence" value="ECO:0007669"/>
    <property type="project" value="UniProtKB-SubCell"/>
</dbReference>
<dbReference type="GO" id="GO:0045271">
    <property type="term" value="C:respiratory chain complex I"/>
    <property type="evidence" value="ECO:0007669"/>
    <property type="project" value="TreeGrafter"/>
</dbReference>
<dbReference type="GO" id="GO:0051539">
    <property type="term" value="F:4 iron, 4 sulfur cluster binding"/>
    <property type="evidence" value="ECO:0007669"/>
    <property type="project" value="UniProtKB-KW"/>
</dbReference>
<dbReference type="GO" id="GO:0005506">
    <property type="term" value="F:iron ion binding"/>
    <property type="evidence" value="ECO:0007669"/>
    <property type="project" value="UniProtKB-UniRule"/>
</dbReference>
<dbReference type="GO" id="GO:0008137">
    <property type="term" value="F:NADH dehydrogenase (ubiquinone) activity"/>
    <property type="evidence" value="ECO:0007669"/>
    <property type="project" value="InterPro"/>
</dbReference>
<dbReference type="GO" id="GO:0050136">
    <property type="term" value="F:NADH:ubiquinone reductase (non-electrogenic) activity"/>
    <property type="evidence" value="ECO:0007669"/>
    <property type="project" value="UniProtKB-UniRule"/>
</dbReference>
<dbReference type="GO" id="GO:0048038">
    <property type="term" value="F:quinone binding"/>
    <property type="evidence" value="ECO:0007669"/>
    <property type="project" value="UniProtKB-KW"/>
</dbReference>
<dbReference type="GO" id="GO:0009060">
    <property type="term" value="P:aerobic respiration"/>
    <property type="evidence" value="ECO:0007669"/>
    <property type="project" value="TreeGrafter"/>
</dbReference>
<dbReference type="GO" id="GO:0015990">
    <property type="term" value="P:electron transport coupled proton transport"/>
    <property type="evidence" value="ECO:0007669"/>
    <property type="project" value="TreeGrafter"/>
</dbReference>
<dbReference type="FunFam" id="3.40.50.12280:FF:000002">
    <property type="entry name" value="NADH-quinone oxidoreductase subunit B"/>
    <property type="match status" value="1"/>
</dbReference>
<dbReference type="Gene3D" id="3.40.50.12280">
    <property type="match status" value="1"/>
</dbReference>
<dbReference type="HAMAP" id="MF_01356">
    <property type="entry name" value="NDH1_NuoB"/>
    <property type="match status" value="1"/>
</dbReference>
<dbReference type="InterPro" id="IPR006137">
    <property type="entry name" value="NADH_UbQ_OxRdtase-like_20kDa"/>
</dbReference>
<dbReference type="InterPro" id="IPR006138">
    <property type="entry name" value="NADH_UQ_OxRdtase_20Kd_su"/>
</dbReference>
<dbReference type="NCBIfam" id="TIGR01957">
    <property type="entry name" value="nuoB_fam"/>
    <property type="match status" value="1"/>
</dbReference>
<dbReference type="NCBIfam" id="NF005012">
    <property type="entry name" value="PRK06411.1"/>
    <property type="match status" value="1"/>
</dbReference>
<dbReference type="NCBIfam" id="NF011394">
    <property type="entry name" value="PRK14819.1"/>
    <property type="match status" value="1"/>
</dbReference>
<dbReference type="PANTHER" id="PTHR11995">
    <property type="entry name" value="NADH DEHYDROGENASE"/>
    <property type="match status" value="1"/>
</dbReference>
<dbReference type="PANTHER" id="PTHR11995:SF33">
    <property type="entry name" value="NADH-QUINONE OXIDOREDUCTASE SUBUNIT B 2"/>
    <property type="match status" value="1"/>
</dbReference>
<dbReference type="Pfam" id="PF01058">
    <property type="entry name" value="Oxidored_q6"/>
    <property type="match status" value="1"/>
</dbReference>
<dbReference type="SUPFAM" id="SSF56770">
    <property type="entry name" value="HydA/Nqo6-like"/>
    <property type="match status" value="1"/>
</dbReference>
<comment type="function">
    <text evidence="1">NDH-1 shuttles electrons from NADH, via FMN and iron-sulfur (Fe-S) centers, to quinones in the respiratory chain. The immediate electron acceptor for the enzyme in this species is believed to be ubiquinone. Couples the redox reaction to proton translocation (for every two electrons transferred, four hydrogen ions are translocated across the cytoplasmic membrane), and thus conserves the redox energy in a proton gradient.</text>
</comment>
<comment type="catalytic activity">
    <reaction evidence="1">
        <text>a quinone + NADH + 5 H(+)(in) = a quinol + NAD(+) + 4 H(+)(out)</text>
        <dbReference type="Rhea" id="RHEA:57888"/>
        <dbReference type="ChEBI" id="CHEBI:15378"/>
        <dbReference type="ChEBI" id="CHEBI:24646"/>
        <dbReference type="ChEBI" id="CHEBI:57540"/>
        <dbReference type="ChEBI" id="CHEBI:57945"/>
        <dbReference type="ChEBI" id="CHEBI:132124"/>
    </reaction>
</comment>
<comment type="cofactor">
    <cofactor evidence="1">
        <name>[4Fe-4S] cluster</name>
        <dbReference type="ChEBI" id="CHEBI:49883"/>
    </cofactor>
    <text evidence="1">Binds 1 [4Fe-4S] cluster.</text>
</comment>
<comment type="subunit">
    <text evidence="1">NDH-1 is composed of 14 different subunits. Subunits NuoB, C, D, E, F, and G constitute the peripheral sector of the complex.</text>
</comment>
<comment type="subcellular location">
    <subcellularLocation>
        <location evidence="1">Cell membrane</location>
        <topology evidence="1">Peripheral membrane protein</topology>
        <orientation evidence="1">Cytoplasmic side</orientation>
    </subcellularLocation>
</comment>
<comment type="similarity">
    <text evidence="1">Belongs to the complex I 20 kDa subunit family.</text>
</comment>
<keyword id="KW-0004">4Fe-4S</keyword>
<keyword id="KW-1003">Cell membrane</keyword>
<keyword id="KW-0408">Iron</keyword>
<keyword id="KW-0411">Iron-sulfur</keyword>
<keyword id="KW-0472">Membrane</keyword>
<keyword id="KW-0479">Metal-binding</keyword>
<keyword id="KW-0520">NAD</keyword>
<keyword id="KW-0874">Quinone</keyword>
<keyword id="KW-1278">Translocase</keyword>
<keyword id="KW-0813">Transport</keyword>
<keyword id="KW-0830">Ubiquinone</keyword>
<reference key="1">
    <citation type="submission" date="2007-04" db="EMBL/GenBank/DDBJ databases">
        <title>Complete sequence of Roseiflexus sp. RS-1.</title>
        <authorList>
            <consortium name="US DOE Joint Genome Institute"/>
            <person name="Copeland A."/>
            <person name="Lucas S."/>
            <person name="Lapidus A."/>
            <person name="Barry K."/>
            <person name="Detter J.C."/>
            <person name="Glavina del Rio T."/>
            <person name="Hammon N."/>
            <person name="Israni S."/>
            <person name="Dalin E."/>
            <person name="Tice H."/>
            <person name="Pitluck S."/>
            <person name="Chertkov O."/>
            <person name="Brettin T."/>
            <person name="Bruce D."/>
            <person name="Han C."/>
            <person name="Schmutz J."/>
            <person name="Larimer F."/>
            <person name="Land M."/>
            <person name="Hauser L."/>
            <person name="Kyrpides N."/>
            <person name="Mikhailova N."/>
            <person name="Bryant D.A."/>
            <person name="Richardson P."/>
        </authorList>
    </citation>
    <scope>NUCLEOTIDE SEQUENCE [LARGE SCALE GENOMIC DNA]</scope>
    <source>
        <strain>RS-1</strain>
    </source>
</reference>
<accession>A5UXK1</accession>
<feature type="chain" id="PRO_0000376350" description="NADH-quinone oxidoreductase subunit B 1">
    <location>
        <begin position="1"/>
        <end position="268"/>
    </location>
</feature>
<feature type="binding site" evidence="1">
    <location>
        <position position="42"/>
    </location>
    <ligand>
        <name>[4Fe-4S] cluster</name>
        <dbReference type="ChEBI" id="CHEBI:49883"/>
    </ligand>
</feature>
<feature type="binding site" evidence="1">
    <location>
        <position position="43"/>
    </location>
    <ligand>
        <name>[4Fe-4S] cluster</name>
        <dbReference type="ChEBI" id="CHEBI:49883"/>
    </ligand>
</feature>
<feature type="binding site" evidence="1">
    <location>
        <position position="108"/>
    </location>
    <ligand>
        <name>[4Fe-4S] cluster</name>
        <dbReference type="ChEBI" id="CHEBI:49883"/>
    </ligand>
</feature>
<feature type="binding site" evidence="1">
    <location>
        <position position="138"/>
    </location>
    <ligand>
        <name>[4Fe-4S] cluster</name>
        <dbReference type="ChEBI" id="CHEBI:49883"/>
    </ligand>
</feature>
<evidence type="ECO:0000255" key="1">
    <source>
        <dbReference type="HAMAP-Rule" id="MF_01356"/>
    </source>
</evidence>